<organism>
    <name type="scientific">Ruegeria sp. (strain TM1040)</name>
    <name type="common">Silicibacter sp.</name>
    <dbReference type="NCBI Taxonomy" id="292414"/>
    <lineage>
        <taxon>Bacteria</taxon>
        <taxon>Pseudomonadati</taxon>
        <taxon>Pseudomonadota</taxon>
        <taxon>Alphaproteobacteria</taxon>
        <taxon>Rhodobacterales</taxon>
        <taxon>Roseobacteraceae</taxon>
        <taxon>Ruegeria</taxon>
    </lineage>
</organism>
<name>THIQ_RUEST</name>
<evidence type="ECO:0000255" key="1">
    <source>
        <dbReference type="HAMAP-Rule" id="MF_01723"/>
    </source>
</evidence>
<proteinExistence type="inferred from homology"/>
<dbReference type="EC" id="7.6.2.15" evidence="1"/>
<dbReference type="EMBL" id="CP000377">
    <property type="protein sequence ID" value="ABF65548.1"/>
    <property type="molecule type" value="Genomic_DNA"/>
</dbReference>
<dbReference type="RefSeq" id="WP_011540130.1">
    <property type="nucleotide sequence ID" value="NC_008044.1"/>
</dbReference>
<dbReference type="SMR" id="Q1GCR8"/>
<dbReference type="STRING" id="292414.TM1040_2816"/>
<dbReference type="KEGG" id="sit:TM1040_2816"/>
<dbReference type="eggNOG" id="COG3840">
    <property type="taxonomic scope" value="Bacteria"/>
</dbReference>
<dbReference type="HOGENOM" id="CLU_000604_1_22_5"/>
<dbReference type="OrthoDB" id="9802264at2"/>
<dbReference type="Proteomes" id="UP000000636">
    <property type="component" value="Chromosome"/>
</dbReference>
<dbReference type="GO" id="GO:0005886">
    <property type="term" value="C:plasma membrane"/>
    <property type="evidence" value="ECO:0007669"/>
    <property type="project" value="UniProtKB-SubCell"/>
</dbReference>
<dbReference type="GO" id="GO:0048502">
    <property type="term" value="F:ABC-type thiamine transporter activity"/>
    <property type="evidence" value="ECO:0007669"/>
    <property type="project" value="UniProtKB-EC"/>
</dbReference>
<dbReference type="GO" id="GO:0005524">
    <property type="term" value="F:ATP binding"/>
    <property type="evidence" value="ECO:0007669"/>
    <property type="project" value="UniProtKB-KW"/>
</dbReference>
<dbReference type="GO" id="GO:0016887">
    <property type="term" value="F:ATP hydrolysis activity"/>
    <property type="evidence" value="ECO:0007669"/>
    <property type="project" value="InterPro"/>
</dbReference>
<dbReference type="Gene3D" id="3.40.50.300">
    <property type="entry name" value="P-loop containing nucleotide triphosphate hydrolases"/>
    <property type="match status" value="1"/>
</dbReference>
<dbReference type="InterPro" id="IPR003593">
    <property type="entry name" value="AAA+_ATPase"/>
</dbReference>
<dbReference type="InterPro" id="IPR050093">
    <property type="entry name" value="ABC_SmlMolc_Importer"/>
</dbReference>
<dbReference type="InterPro" id="IPR003439">
    <property type="entry name" value="ABC_transporter-like_ATP-bd"/>
</dbReference>
<dbReference type="InterPro" id="IPR017871">
    <property type="entry name" value="ABC_transporter-like_CS"/>
</dbReference>
<dbReference type="InterPro" id="IPR027417">
    <property type="entry name" value="P-loop_NTPase"/>
</dbReference>
<dbReference type="PANTHER" id="PTHR42781">
    <property type="entry name" value="SPERMIDINE/PUTRESCINE IMPORT ATP-BINDING PROTEIN POTA"/>
    <property type="match status" value="1"/>
</dbReference>
<dbReference type="PANTHER" id="PTHR42781:SF1">
    <property type="entry name" value="THIAMINE IMPORT ATP-BINDING PROTEIN THIQ"/>
    <property type="match status" value="1"/>
</dbReference>
<dbReference type="Pfam" id="PF00005">
    <property type="entry name" value="ABC_tran"/>
    <property type="match status" value="1"/>
</dbReference>
<dbReference type="SMART" id="SM00382">
    <property type="entry name" value="AAA"/>
    <property type="match status" value="1"/>
</dbReference>
<dbReference type="SUPFAM" id="SSF52540">
    <property type="entry name" value="P-loop containing nucleoside triphosphate hydrolases"/>
    <property type="match status" value="1"/>
</dbReference>
<dbReference type="PROSITE" id="PS00211">
    <property type="entry name" value="ABC_TRANSPORTER_1"/>
    <property type="match status" value="1"/>
</dbReference>
<dbReference type="PROSITE" id="PS50893">
    <property type="entry name" value="ABC_TRANSPORTER_2"/>
    <property type="match status" value="1"/>
</dbReference>
<dbReference type="PROSITE" id="PS51288">
    <property type="entry name" value="THIQ"/>
    <property type="match status" value="1"/>
</dbReference>
<comment type="function">
    <text evidence="1">Part of the ABC transporter complex ThiBPQ involved in thiamine import. Responsible for energy coupling to the transport system.</text>
</comment>
<comment type="catalytic activity">
    <reaction evidence="1">
        <text>thiamine(out) + ATP + H2O = thiamine(in) + ADP + phosphate + H(+)</text>
        <dbReference type="Rhea" id="RHEA:29811"/>
        <dbReference type="ChEBI" id="CHEBI:15377"/>
        <dbReference type="ChEBI" id="CHEBI:15378"/>
        <dbReference type="ChEBI" id="CHEBI:18385"/>
        <dbReference type="ChEBI" id="CHEBI:30616"/>
        <dbReference type="ChEBI" id="CHEBI:43474"/>
        <dbReference type="ChEBI" id="CHEBI:456216"/>
        <dbReference type="EC" id="7.6.2.15"/>
    </reaction>
</comment>
<comment type="subunit">
    <text evidence="1">The complex is composed of two ATP-binding proteins (ThiQ), two transmembrane proteins (ThiP) and a solute-binding protein (ThiB).</text>
</comment>
<comment type="subcellular location">
    <subcellularLocation>
        <location evidence="1">Cell inner membrane</location>
        <topology evidence="1">Peripheral membrane protein</topology>
    </subcellularLocation>
</comment>
<comment type="similarity">
    <text evidence="1">Belongs to the ABC transporter superfamily. Thiamine importer (TC 3.A.1.19.1) family.</text>
</comment>
<gene>
    <name evidence="1" type="primary">thiQ</name>
    <name type="ordered locus">TM1040_2816</name>
</gene>
<keyword id="KW-0067">ATP-binding</keyword>
<keyword id="KW-0997">Cell inner membrane</keyword>
<keyword id="KW-1003">Cell membrane</keyword>
<keyword id="KW-0472">Membrane</keyword>
<keyword id="KW-0547">Nucleotide-binding</keyword>
<keyword id="KW-1185">Reference proteome</keyword>
<keyword id="KW-1278">Translocase</keyword>
<keyword id="KW-0813">Transport</keyword>
<protein>
    <recommendedName>
        <fullName evidence="1">Thiamine import ATP-binding protein ThiQ</fullName>
        <ecNumber evidence="1">7.6.2.15</ecNumber>
    </recommendedName>
</protein>
<accession>Q1GCR8</accession>
<reference key="1">
    <citation type="submission" date="2006-05" db="EMBL/GenBank/DDBJ databases">
        <title>Complete sequence of chromosome of Silicibacter sp. TM1040.</title>
        <authorList>
            <consortium name="US DOE Joint Genome Institute"/>
            <person name="Copeland A."/>
            <person name="Lucas S."/>
            <person name="Lapidus A."/>
            <person name="Barry K."/>
            <person name="Detter J.C."/>
            <person name="Glavina del Rio T."/>
            <person name="Hammon N."/>
            <person name="Israni S."/>
            <person name="Dalin E."/>
            <person name="Tice H."/>
            <person name="Pitluck S."/>
            <person name="Brettin T."/>
            <person name="Bruce D."/>
            <person name="Han C."/>
            <person name="Tapia R."/>
            <person name="Goodwin L."/>
            <person name="Thompson L.S."/>
            <person name="Gilna P."/>
            <person name="Schmutz J."/>
            <person name="Larimer F."/>
            <person name="Land M."/>
            <person name="Hauser L."/>
            <person name="Kyrpides N."/>
            <person name="Kim E."/>
            <person name="Belas R."/>
            <person name="Moran M.A."/>
            <person name="Buchan A."/>
            <person name="Gonzalez J.M."/>
            <person name="Schell M.A."/>
            <person name="Sun F."/>
            <person name="Richardson P."/>
        </authorList>
    </citation>
    <scope>NUCLEOTIDE SEQUENCE [LARGE SCALE GENOMIC DNA]</scope>
    <source>
        <strain>TM1040</strain>
    </source>
</reference>
<feature type="chain" id="PRO_0000274463" description="Thiamine import ATP-binding protein ThiQ">
    <location>
        <begin position="1"/>
        <end position="231"/>
    </location>
</feature>
<feature type="domain" description="ABC transporter" evidence="1">
    <location>
        <begin position="2"/>
        <end position="230"/>
    </location>
</feature>
<feature type="binding site" evidence="1">
    <location>
        <begin position="32"/>
        <end position="39"/>
    </location>
    <ligand>
        <name>ATP</name>
        <dbReference type="ChEBI" id="CHEBI:30616"/>
    </ligand>
</feature>
<sequence>MLRLEDLDIRKGSFCLSGTASIGAADSVAVIGPSGAGKSTLLEAIAGFQPLHAGQVLWRGEDLTAHRPGQRPVAMLFQDGNLFPHLTVRQNAGLGIDPNRKLRPKERQTVEEAIARVGLGGLEERKPAELSGGQQSRAALARVLVQRRDILLLDEPFAALGPALKAEMLDLVKEITSENGVTLLMVSHDPDDARRIADQVILIAEGQLYPPAPTHALLDNPPPALRGYLGA</sequence>